<organism>
    <name type="scientific">Mus musculus</name>
    <name type="common">Mouse</name>
    <dbReference type="NCBI Taxonomy" id="10090"/>
    <lineage>
        <taxon>Eukaryota</taxon>
        <taxon>Metazoa</taxon>
        <taxon>Chordata</taxon>
        <taxon>Craniata</taxon>
        <taxon>Vertebrata</taxon>
        <taxon>Euteleostomi</taxon>
        <taxon>Mammalia</taxon>
        <taxon>Eutheria</taxon>
        <taxon>Euarchontoglires</taxon>
        <taxon>Glires</taxon>
        <taxon>Rodentia</taxon>
        <taxon>Myomorpha</taxon>
        <taxon>Muroidea</taxon>
        <taxon>Muridae</taxon>
        <taxon>Murinae</taxon>
        <taxon>Mus</taxon>
        <taxon>Mus</taxon>
    </lineage>
</organism>
<dbReference type="EC" id="2.4.1.256" evidence="2"/>
<dbReference type="EMBL" id="AK147821">
    <property type="protein sequence ID" value="BAE28159.1"/>
    <property type="molecule type" value="mRNA"/>
</dbReference>
<dbReference type="EMBL" id="AK166344">
    <property type="protein sequence ID" value="BAE38718.1"/>
    <property type="molecule type" value="mRNA"/>
</dbReference>
<dbReference type="CCDS" id="CCDS27757.1"/>
<dbReference type="RefSeq" id="NP_001028613.1">
    <property type="nucleotide sequence ID" value="NM_001033441.4"/>
</dbReference>
<dbReference type="BioGRID" id="237721">
    <property type="interactions" value="1"/>
</dbReference>
<dbReference type="FunCoup" id="Q3UGP8">
    <property type="interactions" value="3081"/>
</dbReference>
<dbReference type="STRING" id="10090.ENSMUSP00000097882"/>
<dbReference type="CAZy" id="GT59">
    <property type="family name" value="Glycosyltransferase Family 59"/>
</dbReference>
<dbReference type="iPTMnet" id="Q3UGP8"/>
<dbReference type="PhosphoSitePlus" id="Q3UGP8"/>
<dbReference type="SwissPalm" id="Q3UGP8"/>
<dbReference type="PaxDb" id="10090-ENSMUSP00000097882"/>
<dbReference type="PeptideAtlas" id="Q3UGP8"/>
<dbReference type="ProteomicsDB" id="285561"/>
<dbReference type="DNASU" id="380959"/>
<dbReference type="Ensembl" id="ENSMUST00000100309.3">
    <property type="protein sequence ID" value="ENSMUSP00000097882.2"/>
    <property type="gene ID" value="ENSMUSG00000075470.3"/>
</dbReference>
<dbReference type="GeneID" id="380959"/>
<dbReference type="KEGG" id="mmu:380959"/>
<dbReference type="UCSC" id="uc007xhj.1">
    <property type="organism name" value="mouse"/>
</dbReference>
<dbReference type="AGR" id="MGI:2146159"/>
<dbReference type="CTD" id="144245"/>
<dbReference type="MGI" id="MGI:2146159">
    <property type="gene designation" value="Alg10b"/>
</dbReference>
<dbReference type="VEuPathDB" id="HostDB:ENSMUSG00000075470"/>
<dbReference type="eggNOG" id="KOG2642">
    <property type="taxonomic scope" value="Eukaryota"/>
</dbReference>
<dbReference type="GeneTree" id="ENSGT00390000012906"/>
<dbReference type="HOGENOM" id="CLU_017053_1_0_1"/>
<dbReference type="InParanoid" id="Q3UGP8"/>
<dbReference type="OMA" id="VWDSKIT"/>
<dbReference type="OrthoDB" id="4769at2759"/>
<dbReference type="PhylomeDB" id="Q3UGP8"/>
<dbReference type="TreeFam" id="TF300150"/>
<dbReference type="UniPathway" id="UPA00378"/>
<dbReference type="BioGRID-ORCS" id="380959">
    <property type="hits" value="10 hits in 80 CRISPR screens"/>
</dbReference>
<dbReference type="PRO" id="PR:Q3UGP8"/>
<dbReference type="Proteomes" id="UP000000589">
    <property type="component" value="Chromosome 15"/>
</dbReference>
<dbReference type="RNAct" id="Q3UGP8">
    <property type="molecule type" value="protein"/>
</dbReference>
<dbReference type="Bgee" id="ENSMUSG00000075470">
    <property type="expression patterns" value="Expressed in manus and 230 other cell types or tissues"/>
</dbReference>
<dbReference type="ExpressionAtlas" id="Q3UGP8">
    <property type="expression patterns" value="baseline and differential"/>
</dbReference>
<dbReference type="GO" id="GO:0005789">
    <property type="term" value="C:endoplasmic reticulum membrane"/>
    <property type="evidence" value="ECO:0000250"/>
    <property type="project" value="UniProtKB"/>
</dbReference>
<dbReference type="GO" id="GO:0106073">
    <property type="term" value="F:dolichyl pyrophosphate Glc2Man9GlcNAc2 alpha-1,2-glucosyltransferase activity"/>
    <property type="evidence" value="ECO:0000250"/>
    <property type="project" value="UniProtKB"/>
</dbReference>
<dbReference type="GO" id="GO:0060117">
    <property type="term" value="P:auditory receptor cell development"/>
    <property type="evidence" value="ECO:0000315"/>
    <property type="project" value="MGI"/>
</dbReference>
<dbReference type="GO" id="GO:0006488">
    <property type="term" value="P:dolichol-linked oligosaccharide biosynthetic process"/>
    <property type="evidence" value="ECO:0000250"/>
    <property type="project" value="UniProtKB"/>
</dbReference>
<dbReference type="GO" id="GO:0071805">
    <property type="term" value="P:potassium ion transmembrane transport"/>
    <property type="evidence" value="ECO:0007669"/>
    <property type="project" value="Ensembl"/>
</dbReference>
<dbReference type="GO" id="GO:0006487">
    <property type="term" value="P:protein N-linked glycosylation"/>
    <property type="evidence" value="ECO:0000250"/>
    <property type="project" value="UniProtKB"/>
</dbReference>
<dbReference type="GO" id="GO:0007605">
    <property type="term" value="P:sensory perception of sound"/>
    <property type="evidence" value="ECO:0000315"/>
    <property type="project" value="MGI"/>
</dbReference>
<dbReference type="InterPro" id="IPR016900">
    <property type="entry name" value="Alg10"/>
</dbReference>
<dbReference type="PANTHER" id="PTHR12989">
    <property type="entry name" value="ALPHA-1,2-GLUCOSYLTRANSFERASE ALG10"/>
    <property type="match status" value="1"/>
</dbReference>
<dbReference type="PANTHER" id="PTHR12989:SF10">
    <property type="entry name" value="DOL-P-GLC:GLC(2)MAN(9)GLCNAC(2)-PP-DOL ALPHA-1,2-GLUCOSYLTRANSFERASE-RELATED"/>
    <property type="match status" value="1"/>
</dbReference>
<dbReference type="Pfam" id="PF04922">
    <property type="entry name" value="DIE2_ALG10"/>
    <property type="match status" value="1"/>
</dbReference>
<dbReference type="PIRSF" id="PIRSF028810">
    <property type="entry name" value="Alpha1_2_glucosyltferase_Alg10"/>
    <property type="match status" value="1"/>
</dbReference>
<proteinExistence type="evidence at protein level"/>
<name>AG10B_MOUSE</name>
<sequence length="474" mass="55465">MAQLEGYYFSAALSCTFLVSCLLFSAFSRALREPYMDEIFHLPQAQRYCEGRFSLSQWDPMITTLPGLYLVSVGVVKPASWLLGWSEHVICSIGVLRFVNLLFSVGNFYLLYLLFRKVQPRNKASSSIQRILSTLTLAVFPTLYFFNFLYYTEAGSVFFTLFAYLMCLYGNHRTSALLGFCGFMFRQTNIIWAAFCAGHLIAQKCSEAWKIELQKKKEERLAPTKGPLSELRRVLQFLLVYAMSLKNLRMLFLLTWPYVLLLLAFFAFVVVNGGIVVGDRSSHEACLHFPQLFYFFSFTAFFSFPHLLSLTKVKTFLSLVWKRRVQFSVVTLVSILLVWKFTYVHKYLLADNRHYTFYVWKRVFQRHEVVKYLLVPAYIFAGWAIADSLKAKSIFWNLMFFVCLVASTVPQKLLEFRYFILPYIIYRLNIPLPPISRLVCELGCYTVVNFVTFYIFLNKTFQWPNSQDIQRFMW</sequence>
<feature type="chain" id="PRO_0000320064" description="Dol-P-Glc:Glc(2)Man(9)GlcNAc(2)-PP-Dol alpha-1,2-glucosyltransferase">
    <location>
        <begin position="1"/>
        <end position="474"/>
    </location>
</feature>
<feature type="topological domain" description="Cytoplasmic" evidence="3">
    <location>
        <begin position="1"/>
        <end position="6"/>
    </location>
</feature>
<feature type="transmembrane region" description="Helical" evidence="3">
    <location>
        <begin position="7"/>
        <end position="27"/>
    </location>
</feature>
<feature type="topological domain" description="Extracellular" evidence="3">
    <location>
        <begin position="28"/>
        <end position="64"/>
    </location>
</feature>
<feature type="transmembrane region" description="Helical" evidence="3">
    <location>
        <begin position="65"/>
        <end position="85"/>
    </location>
</feature>
<feature type="topological domain" description="Cytoplasmic" evidence="3">
    <location>
        <begin position="86"/>
        <end position="97"/>
    </location>
</feature>
<feature type="transmembrane region" description="Helical" evidence="3">
    <location>
        <begin position="98"/>
        <end position="118"/>
    </location>
</feature>
<feature type="topological domain" description="Extracellular" evidence="3">
    <location>
        <begin position="119"/>
        <end position="126"/>
    </location>
</feature>
<feature type="transmembrane region" description="Helical" evidence="3">
    <location>
        <begin position="127"/>
        <end position="147"/>
    </location>
</feature>
<feature type="topological domain" description="Cytoplasmic" evidence="3">
    <location>
        <begin position="148"/>
        <end position="150"/>
    </location>
</feature>
<feature type="transmembrane region" description="Helical" evidence="3">
    <location>
        <begin position="151"/>
        <end position="171"/>
    </location>
</feature>
<feature type="topological domain" description="Extracellular" evidence="3">
    <location>
        <begin position="172"/>
        <end position="175"/>
    </location>
</feature>
<feature type="transmembrane region" description="Helical" evidence="3">
    <location>
        <begin position="176"/>
        <end position="196"/>
    </location>
</feature>
<feature type="topological domain" description="Cytoplasmic" evidence="3">
    <location>
        <begin position="197"/>
        <end position="256"/>
    </location>
</feature>
<feature type="transmembrane region" description="Helical" evidence="3">
    <location>
        <begin position="257"/>
        <end position="277"/>
    </location>
</feature>
<feature type="topological domain" description="Extracellular" evidence="3">
    <location>
        <begin position="278"/>
        <end position="283"/>
    </location>
</feature>
<feature type="transmembrane region" description="Helical" evidence="3">
    <location>
        <begin position="284"/>
        <end position="304"/>
    </location>
</feature>
<feature type="topological domain" description="Cytoplasmic" evidence="3">
    <location>
        <begin position="305"/>
        <end position="317"/>
    </location>
</feature>
<feature type="transmembrane region" description="Helical" evidence="3">
    <location>
        <begin position="318"/>
        <end position="338"/>
    </location>
</feature>
<feature type="topological domain" description="Extracellular" evidence="3">
    <location>
        <begin position="339"/>
        <end position="365"/>
    </location>
</feature>
<feature type="transmembrane region" description="Helical" evidence="3">
    <location>
        <begin position="366"/>
        <end position="386"/>
    </location>
</feature>
<feature type="topological domain" description="Cytoplasmic" evidence="3">
    <location>
        <begin position="387"/>
        <end position="392"/>
    </location>
</feature>
<feature type="transmembrane region" description="Helical" evidence="3">
    <location>
        <begin position="393"/>
        <end position="413"/>
    </location>
</feature>
<feature type="topological domain" description="Extracellular" evidence="3">
    <location>
        <begin position="414"/>
        <end position="436"/>
    </location>
</feature>
<feature type="transmembrane region" description="Helical" evidence="3">
    <location>
        <begin position="437"/>
        <end position="457"/>
    </location>
</feature>
<feature type="topological domain" description="Cytoplasmic" evidence="3">
    <location>
        <begin position="458"/>
        <end position="473"/>
    </location>
</feature>
<feature type="mutagenesis site" description="Significant hearing impairment, associated with loss or degeneration of cochlear outer hair cells." evidence="4">
    <original>L</original>
    <variation>S</variation>
    <location>
        <position position="389"/>
    </location>
</feature>
<feature type="sequence conflict" description="In Ref. 1; BAE38718." evidence="5" ref="1">
    <original>I</original>
    <variation>T</variation>
    <location>
        <position position="211"/>
    </location>
</feature>
<feature type="sequence conflict" description="In Ref. 1; BAE38718." evidence="5" ref="1">
    <original>L</original>
    <variation>F</variation>
    <location>
        <position position="221"/>
    </location>
</feature>
<feature type="sequence conflict" description="In Ref. 1; BAE38718." evidence="5" ref="1">
    <original>V</original>
    <variation>L</variation>
    <location>
        <position position="240"/>
    </location>
</feature>
<comment type="function">
    <text evidence="2">Dol-P-Glc:Glc(2)Man(9)GlcNAc(2)-PP-Dol alpha-1,2-glucosyltransferase that operates in the biosynthetic pathway of dolichol-linked oligosaccharides, the glycan precursors employed in protein asparagine (N)-glycosylation. The assembly of dolichol-linked oligosaccharides begins on the cytosolic side of the endoplasmic reticulum membrane and finishes in its lumen. The sequential addition of sugars to dolichol pyrophosphate produces dolichol-linked oligosaccharides containing fourteen sugars, including two GlcNAcs, nine mannoses and three glucoses. Once assembled, the oligosaccharide is transferred from the lipid to nascent proteins by oligosaccharyltransferases. In the lumen of the endoplasmic reticulum, adds the third and last glucose residue from dolichyl phosphate glucose (Dol-P-Glc) onto the lipid-linked oligosaccharide intermediate Glc(2)Man(9)GlcNAc(2)-PP-Dol to produce Glc(3)Man(9)GlcNAc(2)-PP-Dol.</text>
</comment>
<comment type="catalytic activity">
    <reaction evidence="2">
        <text>an alpha-D-Glc-(1-&gt;3)-alpha-D-Glc-(1-&gt;3)-alpha-D-Man-(1-&gt;2)-alpha-D-Man-(1-&gt;2)-alpha-D-Man-(1-&gt;3)-[alpha-D-Man-(1-&gt;2)-alpha-D-Man-(1-&gt;3)-[alpha-D-Man-(1-&gt;2)-alpha-D-Man-(1-&gt;6)]-alpha-D-Man-(1-&gt;6)]-beta-D-Man-(1-&gt;4)-beta-D-GlcNAc-(1-&gt;4)-alpha-D-GlcNAc-diphospho-di-trans,poly-cis-dolichol + a di-trans,poly-cis-dolichyl beta-D-glucosyl phosphate = a alpha-D-Glc-(1-&gt;2)-alpha-D-Glc-(1-&gt;3)-alpha-D-Glc-(1-&gt;3)-alpha-D-Man-(1-&gt;2)-alpha-D-Man-(1-&gt;2)-alpha-D-Man-(1-&gt;3)-[alpha-D-Man-(1-&gt;2)-alpha-D-Man-(1-&gt;3)-[alpha-D-Man-(1-&gt;2)-alpha-D-Man-(1-&gt;6)]-alpha-D-Man-(1-&gt;6)]-beta-D-Man-(1-&gt;4)-beta-D-GlcNAc-(1-&gt;4)-alpha-D-GlcNAc-diphospho-di-trans,poly-cis-dolichol + a di-trans,poly-cis-dolichyl phosphate + H(+)</text>
        <dbReference type="Rhea" id="RHEA:29543"/>
        <dbReference type="Rhea" id="RHEA-COMP:19498"/>
        <dbReference type="Rhea" id="RHEA-COMP:19502"/>
        <dbReference type="Rhea" id="RHEA-COMP:19512"/>
        <dbReference type="Rhea" id="RHEA-COMP:19522"/>
        <dbReference type="ChEBI" id="CHEBI:15378"/>
        <dbReference type="ChEBI" id="CHEBI:57525"/>
        <dbReference type="ChEBI" id="CHEBI:57683"/>
        <dbReference type="ChEBI" id="CHEBI:132522"/>
        <dbReference type="ChEBI" id="CHEBI:132523"/>
        <dbReference type="EC" id="2.4.1.256"/>
    </reaction>
    <physiologicalReaction direction="left-to-right" evidence="2">
        <dbReference type="Rhea" id="RHEA:29544"/>
    </physiologicalReaction>
</comment>
<comment type="pathway">
    <text evidence="2">Protein modification; protein glycosylation.</text>
</comment>
<comment type="subunit">
    <text evidence="1">Interacts with KCNH1; may regulate KCNH1, possibly by regulating its N-glycosylation. Interacts with KCNH2; may reduce KCNH2 sensitivity to classic proarrhythmic drug blockade, possibly by regulating its N-glycosylation.</text>
</comment>
<comment type="subcellular location">
    <subcellularLocation>
        <location evidence="2">Endoplasmic reticulum membrane</location>
        <topology evidence="3">Multi-pass membrane protein</topology>
    </subcellularLocation>
    <text evidence="1">Also detected at the plasma membrane.</text>
</comment>
<comment type="similarity">
    <text evidence="5">Belongs to the ALG10 glucosyltransferase family.</text>
</comment>
<reference key="1">
    <citation type="journal article" date="2005" name="Science">
        <title>The transcriptional landscape of the mammalian genome.</title>
        <authorList>
            <person name="Carninci P."/>
            <person name="Kasukawa T."/>
            <person name="Katayama S."/>
            <person name="Gough J."/>
            <person name="Frith M.C."/>
            <person name="Maeda N."/>
            <person name="Oyama R."/>
            <person name="Ravasi T."/>
            <person name="Lenhard B."/>
            <person name="Wells C."/>
            <person name="Kodzius R."/>
            <person name="Shimokawa K."/>
            <person name="Bajic V.B."/>
            <person name="Brenner S.E."/>
            <person name="Batalov S."/>
            <person name="Forrest A.R."/>
            <person name="Zavolan M."/>
            <person name="Davis M.J."/>
            <person name="Wilming L.G."/>
            <person name="Aidinis V."/>
            <person name="Allen J.E."/>
            <person name="Ambesi-Impiombato A."/>
            <person name="Apweiler R."/>
            <person name="Aturaliya R.N."/>
            <person name="Bailey T.L."/>
            <person name="Bansal M."/>
            <person name="Baxter L."/>
            <person name="Beisel K.W."/>
            <person name="Bersano T."/>
            <person name="Bono H."/>
            <person name="Chalk A.M."/>
            <person name="Chiu K.P."/>
            <person name="Choudhary V."/>
            <person name="Christoffels A."/>
            <person name="Clutterbuck D.R."/>
            <person name="Crowe M.L."/>
            <person name="Dalla E."/>
            <person name="Dalrymple B.P."/>
            <person name="de Bono B."/>
            <person name="Della Gatta G."/>
            <person name="di Bernardo D."/>
            <person name="Down T."/>
            <person name="Engstrom P."/>
            <person name="Fagiolini M."/>
            <person name="Faulkner G."/>
            <person name="Fletcher C.F."/>
            <person name="Fukushima T."/>
            <person name="Furuno M."/>
            <person name="Futaki S."/>
            <person name="Gariboldi M."/>
            <person name="Georgii-Hemming P."/>
            <person name="Gingeras T.R."/>
            <person name="Gojobori T."/>
            <person name="Green R.E."/>
            <person name="Gustincich S."/>
            <person name="Harbers M."/>
            <person name="Hayashi Y."/>
            <person name="Hensch T.K."/>
            <person name="Hirokawa N."/>
            <person name="Hill D."/>
            <person name="Huminiecki L."/>
            <person name="Iacono M."/>
            <person name="Ikeo K."/>
            <person name="Iwama A."/>
            <person name="Ishikawa T."/>
            <person name="Jakt M."/>
            <person name="Kanapin A."/>
            <person name="Katoh M."/>
            <person name="Kawasawa Y."/>
            <person name="Kelso J."/>
            <person name="Kitamura H."/>
            <person name="Kitano H."/>
            <person name="Kollias G."/>
            <person name="Krishnan S.P."/>
            <person name="Kruger A."/>
            <person name="Kummerfeld S.K."/>
            <person name="Kurochkin I.V."/>
            <person name="Lareau L.F."/>
            <person name="Lazarevic D."/>
            <person name="Lipovich L."/>
            <person name="Liu J."/>
            <person name="Liuni S."/>
            <person name="McWilliam S."/>
            <person name="Madan Babu M."/>
            <person name="Madera M."/>
            <person name="Marchionni L."/>
            <person name="Matsuda H."/>
            <person name="Matsuzawa S."/>
            <person name="Miki H."/>
            <person name="Mignone F."/>
            <person name="Miyake S."/>
            <person name="Morris K."/>
            <person name="Mottagui-Tabar S."/>
            <person name="Mulder N."/>
            <person name="Nakano N."/>
            <person name="Nakauchi H."/>
            <person name="Ng P."/>
            <person name="Nilsson R."/>
            <person name="Nishiguchi S."/>
            <person name="Nishikawa S."/>
            <person name="Nori F."/>
            <person name="Ohara O."/>
            <person name="Okazaki Y."/>
            <person name="Orlando V."/>
            <person name="Pang K.C."/>
            <person name="Pavan W.J."/>
            <person name="Pavesi G."/>
            <person name="Pesole G."/>
            <person name="Petrovsky N."/>
            <person name="Piazza S."/>
            <person name="Reed J."/>
            <person name="Reid J.F."/>
            <person name="Ring B.Z."/>
            <person name="Ringwald M."/>
            <person name="Rost B."/>
            <person name="Ruan Y."/>
            <person name="Salzberg S.L."/>
            <person name="Sandelin A."/>
            <person name="Schneider C."/>
            <person name="Schoenbach C."/>
            <person name="Sekiguchi K."/>
            <person name="Semple C.A."/>
            <person name="Seno S."/>
            <person name="Sessa L."/>
            <person name="Sheng Y."/>
            <person name="Shibata Y."/>
            <person name="Shimada H."/>
            <person name="Shimada K."/>
            <person name="Silva D."/>
            <person name="Sinclair B."/>
            <person name="Sperling S."/>
            <person name="Stupka E."/>
            <person name="Sugiura K."/>
            <person name="Sultana R."/>
            <person name="Takenaka Y."/>
            <person name="Taki K."/>
            <person name="Tammoja K."/>
            <person name="Tan S.L."/>
            <person name="Tang S."/>
            <person name="Taylor M.S."/>
            <person name="Tegner J."/>
            <person name="Teichmann S.A."/>
            <person name="Ueda H.R."/>
            <person name="van Nimwegen E."/>
            <person name="Verardo R."/>
            <person name="Wei C.L."/>
            <person name="Yagi K."/>
            <person name="Yamanishi H."/>
            <person name="Zabarovsky E."/>
            <person name="Zhu S."/>
            <person name="Zimmer A."/>
            <person name="Hide W."/>
            <person name="Bult C."/>
            <person name="Grimmond S.M."/>
            <person name="Teasdale R.D."/>
            <person name="Liu E.T."/>
            <person name="Brusic V."/>
            <person name="Quackenbush J."/>
            <person name="Wahlestedt C."/>
            <person name="Mattick J.S."/>
            <person name="Hume D.A."/>
            <person name="Kai C."/>
            <person name="Sasaki D."/>
            <person name="Tomaru Y."/>
            <person name="Fukuda S."/>
            <person name="Kanamori-Katayama M."/>
            <person name="Suzuki M."/>
            <person name="Aoki J."/>
            <person name="Arakawa T."/>
            <person name="Iida J."/>
            <person name="Imamura K."/>
            <person name="Itoh M."/>
            <person name="Kato T."/>
            <person name="Kawaji H."/>
            <person name="Kawagashira N."/>
            <person name="Kawashima T."/>
            <person name="Kojima M."/>
            <person name="Kondo S."/>
            <person name="Konno H."/>
            <person name="Nakano K."/>
            <person name="Ninomiya N."/>
            <person name="Nishio T."/>
            <person name="Okada M."/>
            <person name="Plessy C."/>
            <person name="Shibata K."/>
            <person name="Shiraki T."/>
            <person name="Suzuki S."/>
            <person name="Tagami M."/>
            <person name="Waki K."/>
            <person name="Watahiki A."/>
            <person name="Okamura-Oho Y."/>
            <person name="Suzuki H."/>
            <person name="Kawai J."/>
            <person name="Hayashizaki Y."/>
        </authorList>
    </citation>
    <scope>NUCLEOTIDE SEQUENCE [LARGE SCALE MRNA]</scope>
    <source>
        <strain>C57BL/6J</strain>
        <tissue>Mammary gland</tissue>
    </source>
</reference>
<reference key="2">
    <citation type="journal article" date="2013" name="PLoS ONE">
        <title>A point mutation in the gene for asparagine-linked glycosylation 10B (Alg10b) causes nonsyndromic hearing impairment in mice (Mus musculus).</title>
        <authorList>
            <person name="Probst F.J."/>
            <person name="Corrigan R.R."/>
            <person name="Del Gaudio D."/>
            <person name="Salinger A.P."/>
            <person name="Lorenzo I."/>
            <person name="Gao S.S."/>
            <person name="Chiu I."/>
            <person name="Xia A."/>
            <person name="Oghalai J.S."/>
            <person name="Justice M.J."/>
        </authorList>
    </citation>
    <scope>MUTAGENESIS OF LEU-389</scope>
</reference>
<keyword id="KW-0256">Endoplasmic reticulum</keyword>
<keyword id="KW-0328">Glycosyltransferase</keyword>
<keyword id="KW-0472">Membrane</keyword>
<keyword id="KW-1185">Reference proteome</keyword>
<keyword id="KW-0808">Transferase</keyword>
<keyword id="KW-0812">Transmembrane</keyword>
<keyword id="KW-1133">Transmembrane helix</keyword>
<evidence type="ECO:0000250" key="1">
    <source>
        <dbReference type="UniProtKB" id="O88788"/>
    </source>
</evidence>
<evidence type="ECO:0000250" key="2">
    <source>
        <dbReference type="UniProtKB" id="Q5I7T1"/>
    </source>
</evidence>
<evidence type="ECO:0000255" key="3"/>
<evidence type="ECO:0000269" key="4">
    <source>
    </source>
</evidence>
<evidence type="ECO:0000305" key="5"/>
<evidence type="ECO:0000312" key="6">
    <source>
        <dbReference type="MGI" id="MGI:2146159"/>
    </source>
</evidence>
<accession>Q3UGP8</accession>
<accession>Q3TLS4</accession>
<protein>
    <recommendedName>
        <fullName evidence="2">Dol-P-Glc:Glc(2)Man(9)GlcNAc(2)-PP-Dol alpha-1,2-glucosyltransferase</fullName>
        <ecNumber evidence="2">2.4.1.256</ecNumber>
    </recommendedName>
    <alternativeName>
        <fullName>Alpha-1,2-glucosyltransferase ALG10-A</fullName>
    </alternativeName>
    <alternativeName>
        <fullName>Alpha-2-glucosyltransferase ALG10-B</fullName>
    </alternativeName>
    <alternativeName>
        <fullName evidence="6">Asparagine-linked glycosylation protein 10 homolog B</fullName>
    </alternativeName>
</protein>
<gene>
    <name evidence="6" type="primary">Alg10b</name>
</gene>